<reference key="1">
    <citation type="journal article" date="2007" name="Nat. Biotechnol.">
        <title>Complete genome sequence of the myxobacterium Sorangium cellulosum.</title>
        <authorList>
            <person name="Schneiker S."/>
            <person name="Perlova O."/>
            <person name="Kaiser O."/>
            <person name="Gerth K."/>
            <person name="Alici A."/>
            <person name="Altmeyer M.O."/>
            <person name="Bartels D."/>
            <person name="Bekel T."/>
            <person name="Beyer S."/>
            <person name="Bode E."/>
            <person name="Bode H.B."/>
            <person name="Bolten C.J."/>
            <person name="Choudhuri J.V."/>
            <person name="Doss S."/>
            <person name="Elnakady Y.A."/>
            <person name="Frank B."/>
            <person name="Gaigalat L."/>
            <person name="Goesmann A."/>
            <person name="Groeger C."/>
            <person name="Gross F."/>
            <person name="Jelsbak L."/>
            <person name="Jelsbak L."/>
            <person name="Kalinowski J."/>
            <person name="Kegler C."/>
            <person name="Knauber T."/>
            <person name="Konietzny S."/>
            <person name="Kopp M."/>
            <person name="Krause L."/>
            <person name="Krug D."/>
            <person name="Linke B."/>
            <person name="Mahmud T."/>
            <person name="Martinez-Arias R."/>
            <person name="McHardy A.C."/>
            <person name="Merai M."/>
            <person name="Meyer F."/>
            <person name="Mormann S."/>
            <person name="Munoz-Dorado J."/>
            <person name="Perez J."/>
            <person name="Pradella S."/>
            <person name="Rachid S."/>
            <person name="Raddatz G."/>
            <person name="Rosenau F."/>
            <person name="Rueckert C."/>
            <person name="Sasse F."/>
            <person name="Scharfe M."/>
            <person name="Schuster S.C."/>
            <person name="Suen G."/>
            <person name="Treuner-Lange A."/>
            <person name="Velicer G.J."/>
            <person name="Vorholter F.-J."/>
            <person name="Weissman K.J."/>
            <person name="Welch R.D."/>
            <person name="Wenzel S.C."/>
            <person name="Whitworth D.E."/>
            <person name="Wilhelm S."/>
            <person name="Wittmann C."/>
            <person name="Bloecker H."/>
            <person name="Puehler A."/>
            <person name="Mueller R."/>
        </authorList>
    </citation>
    <scope>NUCLEOTIDE SEQUENCE [LARGE SCALE GENOMIC DNA]</scope>
    <source>
        <strain>So ce56</strain>
    </source>
</reference>
<reference key="2">
    <citation type="journal article" date="2009" name="J. Biol. Chem.">
        <title>Genome mining in Sorangium cellulosum So ce56: identification and characterization of the homologous electron transfer proteins of a myxobacterial cytochrome P450.</title>
        <authorList>
            <person name="Ewen K.M."/>
            <person name="Hannemann F."/>
            <person name="Khatri Y."/>
            <person name="Perlova O."/>
            <person name="Kappl R."/>
            <person name="Krug D."/>
            <person name="Huettermann J."/>
            <person name="Mueller R."/>
            <person name="Bernhardt R."/>
        </authorList>
    </citation>
    <scope>FUNCTION AS AN ELECTRON TRANSFER PROTEIN</scope>
    <source>
        <strain>So ce56</strain>
    </source>
</reference>
<sequence length="107" mass="11881">MAYVIAEPCVATCDTACVPVCPVDCIHGPLAADEISRIPEGERKTRLAGLQLYIDPESCICCGACENECPVGAIFDEDELPAEWQRYREINARFFDDRAKERAPEET</sequence>
<protein>
    <recommendedName>
        <fullName evidence="3">Ferredoxin Fdx8</fullName>
    </recommendedName>
</protein>
<evidence type="ECO:0000255" key="1">
    <source>
        <dbReference type="PROSITE-ProRule" id="PRU00711"/>
    </source>
</evidence>
<evidence type="ECO:0000269" key="2">
    <source>
    </source>
</evidence>
<evidence type="ECO:0000303" key="3">
    <source>
    </source>
</evidence>
<evidence type="ECO:0000312" key="4">
    <source>
        <dbReference type="EMBL" id="CAN95712.1"/>
    </source>
</evidence>
<organism>
    <name type="scientific">Sorangium cellulosum (strain So ce56)</name>
    <name type="common">Polyangium cellulosum (strain So ce56)</name>
    <dbReference type="NCBI Taxonomy" id="448385"/>
    <lineage>
        <taxon>Bacteria</taxon>
        <taxon>Pseudomonadati</taxon>
        <taxon>Myxococcota</taxon>
        <taxon>Polyangia</taxon>
        <taxon>Polyangiales</taxon>
        <taxon>Polyangiaceae</taxon>
        <taxon>Sorangium</taxon>
    </lineage>
</organism>
<accession>A9G317</accession>
<feature type="chain" id="PRO_0000459771" description="Ferredoxin Fdx8">
    <location>
        <begin position="1"/>
        <end position="107"/>
    </location>
</feature>
<feature type="domain" description="4Fe-4S ferredoxin-type 1" evidence="1">
    <location>
        <begin position="1"/>
        <end position="31"/>
    </location>
</feature>
<feature type="domain" description="4Fe-4S ferredoxin-type 2" evidence="1">
    <location>
        <begin position="50"/>
        <end position="79"/>
    </location>
</feature>
<feature type="binding site" evidence="1">
    <location>
        <position position="9"/>
    </location>
    <ligand>
        <name>[4Fe-4S] cluster</name>
        <dbReference type="ChEBI" id="CHEBI:49883"/>
        <label>1</label>
    </ligand>
</feature>
<feature type="binding site" evidence="1">
    <location>
        <position position="13"/>
    </location>
    <ligand>
        <name>[4Fe-4S] cluster</name>
        <dbReference type="ChEBI" id="CHEBI:49883"/>
        <label>1</label>
    </ligand>
</feature>
<feature type="binding site" evidence="1">
    <location>
        <position position="17"/>
    </location>
    <ligand>
        <name>[4Fe-4S] cluster</name>
        <dbReference type="ChEBI" id="CHEBI:49883"/>
        <label>1</label>
    </ligand>
</feature>
<feature type="binding site" evidence="1">
    <location>
        <position position="21"/>
    </location>
    <ligand>
        <name>[4Fe-4S] cluster</name>
        <dbReference type="ChEBI" id="CHEBI:49883"/>
        <label>2</label>
    </ligand>
</feature>
<feature type="binding site" evidence="1">
    <location>
        <position position="59"/>
    </location>
    <ligand>
        <name>[4Fe-4S] cluster</name>
        <dbReference type="ChEBI" id="CHEBI:49883"/>
        <label>2</label>
    </ligand>
</feature>
<feature type="binding site" evidence="1">
    <location>
        <position position="62"/>
    </location>
    <ligand>
        <name>[4Fe-4S] cluster</name>
        <dbReference type="ChEBI" id="CHEBI:49883"/>
        <label>2</label>
    </ligand>
</feature>
<feature type="binding site" evidence="1">
    <location>
        <position position="65"/>
    </location>
    <ligand>
        <name>[4Fe-4S] cluster</name>
        <dbReference type="ChEBI" id="CHEBI:49883"/>
        <label>2</label>
    </ligand>
</feature>
<feature type="binding site" evidence="1">
    <location>
        <position position="69"/>
    </location>
    <ligand>
        <name>[4Fe-4S] cluster</name>
        <dbReference type="ChEBI" id="CHEBI:49883"/>
        <label>1</label>
    </ligand>
</feature>
<keyword id="KW-0004">4Fe-4S</keyword>
<keyword id="KW-0249">Electron transport</keyword>
<keyword id="KW-0408">Iron</keyword>
<keyword id="KW-0411">Iron-sulfur</keyword>
<keyword id="KW-0479">Metal-binding</keyword>
<keyword id="KW-1185">Reference proteome</keyword>
<keyword id="KW-0813">Transport</keyword>
<gene>
    <name evidence="4" type="ordered locus">sce5549</name>
</gene>
<proteinExistence type="evidence at protein level"/>
<dbReference type="EMBL" id="AM746676">
    <property type="protein sequence ID" value="CAN95712.1"/>
    <property type="molecule type" value="Genomic_DNA"/>
</dbReference>
<dbReference type="RefSeq" id="WP_012238179.1">
    <property type="nucleotide sequence ID" value="NC_010162.1"/>
</dbReference>
<dbReference type="SMR" id="A9G317"/>
<dbReference type="STRING" id="448385.sce5549"/>
<dbReference type="KEGG" id="scl:sce5549"/>
<dbReference type="eggNOG" id="COG1143">
    <property type="taxonomic scope" value="Bacteria"/>
</dbReference>
<dbReference type="HOGENOM" id="CLU_139698_0_1_7"/>
<dbReference type="OrthoDB" id="9803397at2"/>
<dbReference type="BioCyc" id="SCEL448385:SCE_RS28470-MONOMER"/>
<dbReference type="Proteomes" id="UP000002139">
    <property type="component" value="Chromosome"/>
</dbReference>
<dbReference type="GO" id="GO:0051539">
    <property type="term" value="F:4 iron, 4 sulfur cluster binding"/>
    <property type="evidence" value="ECO:0007669"/>
    <property type="project" value="UniProtKB-KW"/>
</dbReference>
<dbReference type="GO" id="GO:0009055">
    <property type="term" value="F:electron transfer activity"/>
    <property type="evidence" value="ECO:0007669"/>
    <property type="project" value="InterPro"/>
</dbReference>
<dbReference type="GO" id="GO:0046872">
    <property type="term" value="F:metal ion binding"/>
    <property type="evidence" value="ECO:0007669"/>
    <property type="project" value="UniProtKB-KW"/>
</dbReference>
<dbReference type="Gene3D" id="3.30.70.20">
    <property type="match status" value="1"/>
</dbReference>
<dbReference type="InterPro" id="IPR017896">
    <property type="entry name" value="4Fe4S_Fe-S-bd"/>
</dbReference>
<dbReference type="InterPro" id="IPR017900">
    <property type="entry name" value="4Fe4S_Fe_S_CS"/>
</dbReference>
<dbReference type="InterPro" id="IPR000813">
    <property type="entry name" value="7Fe_ferredoxin"/>
</dbReference>
<dbReference type="InterPro" id="IPR050294">
    <property type="entry name" value="RnfB_subfamily"/>
</dbReference>
<dbReference type="PANTHER" id="PTHR42859:SF2">
    <property type="entry name" value="FERREDOXIN"/>
    <property type="match status" value="1"/>
</dbReference>
<dbReference type="PANTHER" id="PTHR42859">
    <property type="entry name" value="OXIDOREDUCTASE"/>
    <property type="match status" value="1"/>
</dbReference>
<dbReference type="Pfam" id="PF00037">
    <property type="entry name" value="Fer4"/>
    <property type="match status" value="1"/>
</dbReference>
<dbReference type="PRINTS" id="PR00354">
    <property type="entry name" value="7FE8SFRDOXIN"/>
</dbReference>
<dbReference type="SUPFAM" id="SSF54862">
    <property type="entry name" value="4Fe-4S ferredoxins"/>
    <property type="match status" value="1"/>
</dbReference>
<dbReference type="PROSITE" id="PS00198">
    <property type="entry name" value="4FE4S_FER_1"/>
    <property type="match status" value="1"/>
</dbReference>
<dbReference type="PROSITE" id="PS51379">
    <property type="entry name" value="4FE4S_FER_2"/>
    <property type="match status" value="2"/>
</dbReference>
<name>FDX8_SORC5</name>
<comment type="function">
    <text evidence="2">Ferredoxins are iron-sulfur proteins that transfer electrons in a wide variety of metabolic reactions (PubMed:19696019). Fdx2 can receive electrons from both FdR_A and FdR_B ferredoxin reductases, with a preference for FdR_B compared with FdR_A, and transfer the electrons to the cytochrome P450 CYP260A1 (PubMed:19696019).</text>
</comment>
<comment type="cofactor">
    <cofactor evidence="1">
        <name>[4Fe-4S] cluster</name>
        <dbReference type="ChEBI" id="CHEBI:49883"/>
    </cofactor>
    <text evidence="1">Binds 2 [4Fe-4S] clusters.</text>
</comment>